<organism>
    <name type="scientific">Burkholderia cenocepacia (strain ATCC BAA-245 / DSM 16553 / LMG 16656 / NCTC 13227 / J2315 / CF5610)</name>
    <name type="common">Burkholderia cepacia (strain J2315)</name>
    <dbReference type="NCBI Taxonomy" id="216591"/>
    <lineage>
        <taxon>Bacteria</taxon>
        <taxon>Pseudomonadati</taxon>
        <taxon>Pseudomonadota</taxon>
        <taxon>Betaproteobacteria</taxon>
        <taxon>Burkholderiales</taxon>
        <taxon>Burkholderiaceae</taxon>
        <taxon>Burkholderia</taxon>
        <taxon>Burkholderia cepacia complex</taxon>
    </lineage>
</organism>
<accession>B4E5W6</accession>
<reference key="1">
    <citation type="journal article" date="2009" name="J. Bacteriol.">
        <title>The genome of Burkholderia cenocepacia J2315, an epidemic pathogen of cystic fibrosis patients.</title>
        <authorList>
            <person name="Holden M.T."/>
            <person name="Seth-Smith H.M."/>
            <person name="Crossman L.C."/>
            <person name="Sebaihia M."/>
            <person name="Bentley S.D."/>
            <person name="Cerdeno-Tarraga A.M."/>
            <person name="Thomson N.R."/>
            <person name="Bason N."/>
            <person name="Quail M.A."/>
            <person name="Sharp S."/>
            <person name="Cherevach I."/>
            <person name="Churcher C."/>
            <person name="Goodhead I."/>
            <person name="Hauser H."/>
            <person name="Holroyd N."/>
            <person name="Mungall K."/>
            <person name="Scott P."/>
            <person name="Walker D."/>
            <person name="White B."/>
            <person name="Rose H."/>
            <person name="Iversen P."/>
            <person name="Mil-Homens D."/>
            <person name="Rocha E.P."/>
            <person name="Fialho A.M."/>
            <person name="Baldwin A."/>
            <person name="Dowson C."/>
            <person name="Barrell B.G."/>
            <person name="Govan J.R."/>
            <person name="Vandamme P."/>
            <person name="Hart C.A."/>
            <person name="Mahenthiralingam E."/>
            <person name="Parkhill J."/>
        </authorList>
    </citation>
    <scope>NUCLEOTIDE SEQUENCE [LARGE SCALE GENOMIC DNA]</scope>
    <source>
        <strain>ATCC BAA-245 / DSM 16553 / LMG 16656 / NCTC 13227 / J2315 / CF5610</strain>
    </source>
</reference>
<sequence length="578" mass="63867">MKASRFFIGTLKEAPADAEIVSHKLMVRAGMIRRVAGGIYNYLPVGLRSIRKVEAIVREEMNRAGAIELLMPAVQPAELWQESGRWEQYGPELLRFKDRKDNDFVIGPTHEEVVTDIARNQIKSYRQMPVNFYQIQTKFRDEIRPRFGVMRGREFIMKDAYSFDKDAAGLNESYRKMYDAYVRIFSRLGLEFRAVAADSGSIGGNFSHEFHVIADTGEDAIAYCPTSEFAANVEAAEALPLIAERAAPAEAMEKVATPGKAKCEAVAELLSIPLERTIKSIVLATDNEGAEPTIWLVMLRGDHDLNEIKVSKLPGLKNHRFATEQEIVEWFGTPPGYLGPVGTKKPVKVIADRTVANMSDFVVGANEVDYHIAGVNWGRDLPEPDVADVRNVKKGDPSPDGKGVIDICRGIEVGHVFQLGTKYSEAMGATFLDESGKPQPMLMGCYGVGITRILGAAIEQNFDDRGIIWPESIAPFEVVLCPMGYDRSDLVRETADKLYAELVAAGIDVILDDRGERPGVMFADWELIGVPHRLVIGERGLKEGKIEYQGRRDAEATLLPADTAAATVAEKIRAALAH</sequence>
<proteinExistence type="inferred from homology"/>
<dbReference type="EC" id="6.1.1.15" evidence="1"/>
<dbReference type="EMBL" id="AM747720">
    <property type="protein sequence ID" value="CAR53759.1"/>
    <property type="molecule type" value="Genomic_DNA"/>
</dbReference>
<dbReference type="RefSeq" id="WP_006489236.1">
    <property type="nucleotide sequence ID" value="NC_011000.1"/>
</dbReference>
<dbReference type="SMR" id="B4E5W6"/>
<dbReference type="KEGG" id="bcj:BCAL3436"/>
<dbReference type="eggNOG" id="COG0442">
    <property type="taxonomic scope" value="Bacteria"/>
</dbReference>
<dbReference type="HOGENOM" id="CLU_016739_0_0_4"/>
<dbReference type="BioCyc" id="BCEN216591:G1G1V-3819-MONOMER"/>
<dbReference type="Proteomes" id="UP000001035">
    <property type="component" value="Chromosome 1"/>
</dbReference>
<dbReference type="GO" id="GO:0005829">
    <property type="term" value="C:cytosol"/>
    <property type="evidence" value="ECO:0007669"/>
    <property type="project" value="TreeGrafter"/>
</dbReference>
<dbReference type="GO" id="GO:0002161">
    <property type="term" value="F:aminoacyl-tRNA deacylase activity"/>
    <property type="evidence" value="ECO:0007669"/>
    <property type="project" value="InterPro"/>
</dbReference>
<dbReference type="GO" id="GO:0005524">
    <property type="term" value="F:ATP binding"/>
    <property type="evidence" value="ECO:0007669"/>
    <property type="project" value="UniProtKB-UniRule"/>
</dbReference>
<dbReference type="GO" id="GO:0004827">
    <property type="term" value="F:proline-tRNA ligase activity"/>
    <property type="evidence" value="ECO:0007669"/>
    <property type="project" value="UniProtKB-UniRule"/>
</dbReference>
<dbReference type="GO" id="GO:0006433">
    <property type="term" value="P:prolyl-tRNA aminoacylation"/>
    <property type="evidence" value="ECO:0007669"/>
    <property type="project" value="UniProtKB-UniRule"/>
</dbReference>
<dbReference type="CDD" id="cd04334">
    <property type="entry name" value="ProRS-INS"/>
    <property type="match status" value="1"/>
</dbReference>
<dbReference type="CDD" id="cd00861">
    <property type="entry name" value="ProRS_anticodon_short"/>
    <property type="match status" value="1"/>
</dbReference>
<dbReference type="CDD" id="cd00779">
    <property type="entry name" value="ProRS_core_prok"/>
    <property type="match status" value="1"/>
</dbReference>
<dbReference type="FunFam" id="3.30.930.10:FF:000043">
    <property type="entry name" value="Proline--tRNA ligase"/>
    <property type="match status" value="1"/>
</dbReference>
<dbReference type="FunFam" id="3.30.930.10:FF:000097">
    <property type="entry name" value="Proline--tRNA ligase"/>
    <property type="match status" value="1"/>
</dbReference>
<dbReference type="Gene3D" id="3.40.50.800">
    <property type="entry name" value="Anticodon-binding domain"/>
    <property type="match status" value="1"/>
</dbReference>
<dbReference type="Gene3D" id="3.30.930.10">
    <property type="entry name" value="Bira Bifunctional Protein, Domain 2"/>
    <property type="match status" value="2"/>
</dbReference>
<dbReference type="Gene3D" id="3.90.960.10">
    <property type="entry name" value="YbaK/aminoacyl-tRNA synthetase-associated domain"/>
    <property type="match status" value="1"/>
</dbReference>
<dbReference type="HAMAP" id="MF_01569">
    <property type="entry name" value="Pro_tRNA_synth_type1"/>
    <property type="match status" value="1"/>
</dbReference>
<dbReference type="InterPro" id="IPR002314">
    <property type="entry name" value="aa-tRNA-synt_IIb"/>
</dbReference>
<dbReference type="InterPro" id="IPR006195">
    <property type="entry name" value="aa-tRNA-synth_II"/>
</dbReference>
<dbReference type="InterPro" id="IPR045864">
    <property type="entry name" value="aa-tRNA-synth_II/BPL/LPL"/>
</dbReference>
<dbReference type="InterPro" id="IPR004154">
    <property type="entry name" value="Anticodon-bd"/>
</dbReference>
<dbReference type="InterPro" id="IPR036621">
    <property type="entry name" value="Anticodon-bd_dom_sf"/>
</dbReference>
<dbReference type="InterPro" id="IPR002316">
    <property type="entry name" value="Pro-tRNA-ligase_IIa"/>
</dbReference>
<dbReference type="InterPro" id="IPR004500">
    <property type="entry name" value="Pro-tRNA-synth_IIa_bac-type"/>
</dbReference>
<dbReference type="InterPro" id="IPR023717">
    <property type="entry name" value="Pro-tRNA-Synthase_IIa_type1"/>
</dbReference>
<dbReference type="InterPro" id="IPR050062">
    <property type="entry name" value="Pro-tRNA_synthetase"/>
</dbReference>
<dbReference type="InterPro" id="IPR044140">
    <property type="entry name" value="ProRS_anticodon_short"/>
</dbReference>
<dbReference type="InterPro" id="IPR033730">
    <property type="entry name" value="ProRS_core_prok"/>
</dbReference>
<dbReference type="InterPro" id="IPR036754">
    <property type="entry name" value="YbaK/aa-tRNA-synt-asso_dom_sf"/>
</dbReference>
<dbReference type="InterPro" id="IPR007214">
    <property type="entry name" value="YbaK/aa-tRNA-synth-assoc-dom"/>
</dbReference>
<dbReference type="NCBIfam" id="NF006625">
    <property type="entry name" value="PRK09194.1"/>
    <property type="match status" value="1"/>
</dbReference>
<dbReference type="NCBIfam" id="TIGR00409">
    <property type="entry name" value="proS_fam_II"/>
    <property type="match status" value="1"/>
</dbReference>
<dbReference type="PANTHER" id="PTHR42753">
    <property type="entry name" value="MITOCHONDRIAL RIBOSOME PROTEIN L39/PROLYL-TRNA LIGASE FAMILY MEMBER"/>
    <property type="match status" value="1"/>
</dbReference>
<dbReference type="PANTHER" id="PTHR42753:SF2">
    <property type="entry name" value="PROLINE--TRNA LIGASE"/>
    <property type="match status" value="1"/>
</dbReference>
<dbReference type="Pfam" id="PF03129">
    <property type="entry name" value="HGTP_anticodon"/>
    <property type="match status" value="1"/>
</dbReference>
<dbReference type="Pfam" id="PF00587">
    <property type="entry name" value="tRNA-synt_2b"/>
    <property type="match status" value="1"/>
</dbReference>
<dbReference type="Pfam" id="PF04073">
    <property type="entry name" value="tRNA_edit"/>
    <property type="match status" value="1"/>
</dbReference>
<dbReference type="PIRSF" id="PIRSF001535">
    <property type="entry name" value="ProRS_1"/>
    <property type="match status" value="1"/>
</dbReference>
<dbReference type="PRINTS" id="PR01046">
    <property type="entry name" value="TRNASYNTHPRO"/>
</dbReference>
<dbReference type="SUPFAM" id="SSF52954">
    <property type="entry name" value="Class II aaRS ABD-related"/>
    <property type="match status" value="1"/>
</dbReference>
<dbReference type="SUPFAM" id="SSF55681">
    <property type="entry name" value="Class II aaRS and biotin synthetases"/>
    <property type="match status" value="1"/>
</dbReference>
<dbReference type="SUPFAM" id="SSF55826">
    <property type="entry name" value="YbaK/ProRS associated domain"/>
    <property type="match status" value="1"/>
</dbReference>
<dbReference type="PROSITE" id="PS50862">
    <property type="entry name" value="AA_TRNA_LIGASE_II"/>
    <property type="match status" value="1"/>
</dbReference>
<name>SYP_BURCJ</name>
<gene>
    <name evidence="1" type="primary">proS</name>
    <name type="ordered locus">BceJ2315_33740</name>
    <name type="ORF">BCAL3436</name>
</gene>
<evidence type="ECO:0000255" key="1">
    <source>
        <dbReference type="HAMAP-Rule" id="MF_01569"/>
    </source>
</evidence>
<comment type="function">
    <text evidence="1">Catalyzes the attachment of proline to tRNA(Pro) in a two-step reaction: proline is first activated by ATP to form Pro-AMP and then transferred to the acceptor end of tRNA(Pro). As ProRS can inadvertently accommodate and process non-cognate amino acids such as alanine and cysteine, to avoid such errors it has two additional distinct editing activities against alanine. One activity is designated as 'pretransfer' editing and involves the tRNA(Pro)-independent hydrolysis of activated Ala-AMP. The other activity is designated 'posttransfer' editing and involves deacylation of mischarged Ala-tRNA(Pro). The misacylated Cys-tRNA(Pro) is not edited by ProRS.</text>
</comment>
<comment type="catalytic activity">
    <reaction evidence="1">
        <text>tRNA(Pro) + L-proline + ATP = L-prolyl-tRNA(Pro) + AMP + diphosphate</text>
        <dbReference type="Rhea" id="RHEA:14305"/>
        <dbReference type="Rhea" id="RHEA-COMP:9700"/>
        <dbReference type="Rhea" id="RHEA-COMP:9702"/>
        <dbReference type="ChEBI" id="CHEBI:30616"/>
        <dbReference type="ChEBI" id="CHEBI:33019"/>
        <dbReference type="ChEBI" id="CHEBI:60039"/>
        <dbReference type="ChEBI" id="CHEBI:78442"/>
        <dbReference type="ChEBI" id="CHEBI:78532"/>
        <dbReference type="ChEBI" id="CHEBI:456215"/>
        <dbReference type="EC" id="6.1.1.15"/>
    </reaction>
</comment>
<comment type="subunit">
    <text evidence="1">Homodimer.</text>
</comment>
<comment type="subcellular location">
    <subcellularLocation>
        <location evidence="1">Cytoplasm</location>
    </subcellularLocation>
</comment>
<comment type="domain">
    <text evidence="1">Consists of three domains: the N-terminal catalytic domain, the editing domain and the C-terminal anticodon-binding domain.</text>
</comment>
<comment type="similarity">
    <text evidence="1">Belongs to the class-II aminoacyl-tRNA synthetase family. ProS type 1 subfamily.</text>
</comment>
<protein>
    <recommendedName>
        <fullName evidence="1">Proline--tRNA ligase</fullName>
        <ecNumber evidence="1">6.1.1.15</ecNumber>
    </recommendedName>
    <alternativeName>
        <fullName evidence="1">Prolyl-tRNA synthetase</fullName>
        <shortName evidence="1">ProRS</shortName>
    </alternativeName>
</protein>
<feature type="chain" id="PRO_1000199359" description="Proline--tRNA ligase">
    <location>
        <begin position="1"/>
        <end position="578"/>
    </location>
</feature>
<keyword id="KW-0030">Aminoacyl-tRNA synthetase</keyword>
<keyword id="KW-0067">ATP-binding</keyword>
<keyword id="KW-0963">Cytoplasm</keyword>
<keyword id="KW-0436">Ligase</keyword>
<keyword id="KW-0547">Nucleotide-binding</keyword>
<keyword id="KW-0648">Protein biosynthesis</keyword>